<dbReference type="EMBL" id="AF144303">
    <property type="protein sequence ID" value="AAD51925.1"/>
    <property type="molecule type" value="Genomic_RNA"/>
</dbReference>
<dbReference type="RefSeq" id="YP_308667.1">
    <property type="nucleotide sequence ID" value="NC_007360.1"/>
</dbReference>
<dbReference type="PDB" id="4MJ6">
    <property type="method" value="X-ray"/>
    <property type="resolution" value="2.57 A"/>
    <property type="chains" value="C=188-198"/>
</dbReference>
<dbReference type="PDB" id="5GJX">
    <property type="method" value="X-ray"/>
    <property type="resolution" value="2.06 A"/>
    <property type="chains" value="C=55-63"/>
</dbReference>
<dbReference type="PDB" id="5GJY">
    <property type="method" value="X-ray"/>
    <property type="resolution" value="1.71 A"/>
    <property type="chains" value="C=189-197"/>
</dbReference>
<dbReference type="PDB" id="5NQ0">
    <property type="method" value="X-ray"/>
    <property type="resolution" value="1.10 A"/>
    <property type="chains" value="C=290-298"/>
</dbReference>
<dbReference type="PDB" id="5NQ1">
    <property type="method" value="X-ray"/>
    <property type="resolution" value="2.14 A"/>
    <property type="chains" value="C/F=290-298"/>
</dbReference>
<dbReference type="PDB" id="5NQ2">
    <property type="method" value="X-ray"/>
    <property type="resolution" value="1.54 A"/>
    <property type="chains" value="C=217-225"/>
</dbReference>
<dbReference type="PDB" id="5SWS">
    <property type="method" value="X-ray"/>
    <property type="resolution" value="2.86 A"/>
    <property type="chains" value="C=366-374"/>
</dbReference>
<dbReference type="PDB" id="5SWZ">
    <property type="method" value="X-ray"/>
    <property type="resolution" value="2.65 A"/>
    <property type="chains" value="C/H/M/R=366-374"/>
</dbReference>
<dbReference type="PDB" id="6J2A">
    <property type="method" value="X-ray"/>
    <property type="resolution" value="1.40 A"/>
    <property type="chains" value="C=44-52"/>
</dbReference>
<dbReference type="PDB" id="6PBH">
    <property type="method" value="X-ray"/>
    <property type="resolution" value="1.89 A"/>
    <property type="chains" value="C=145-156"/>
</dbReference>
<dbReference type="PDB" id="7JWI">
    <property type="method" value="X-ray"/>
    <property type="resolution" value="3.02 A"/>
    <property type="chains" value="C=366-374"/>
</dbReference>
<dbReference type="PDB" id="7JWJ">
    <property type="method" value="X-ray"/>
    <property type="resolution" value="3.25 A"/>
    <property type="chains" value="C=366-374"/>
</dbReference>
<dbReference type="PDB" id="7NUI">
    <property type="method" value="X-ray"/>
    <property type="resolution" value="2.00 A"/>
    <property type="chains" value="D=380-388"/>
</dbReference>
<dbReference type="PDBsum" id="4MJ6"/>
<dbReference type="PDBsum" id="5GJX"/>
<dbReference type="PDBsum" id="5GJY"/>
<dbReference type="PDBsum" id="5NQ0"/>
<dbReference type="PDBsum" id="5NQ1"/>
<dbReference type="PDBsum" id="5NQ2"/>
<dbReference type="PDBsum" id="5SWS"/>
<dbReference type="PDBsum" id="5SWZ"/>
<dbReference type="PDBsum" id="6J2A"/>
<dbReference type="PDBsum" id="6PBH"/>
<dbReference type="PDBsum" id="7JWI"/>
<dbReference type="PDBsum" id="7JWJ"/>
<dbReference type="PDBsum" id="7NUI"/>
<dbReference type="SMR" id="Q9Q0U8"/>
<dbReference type="GeneID" id="3654618"/>
<dbReference type="KEGG" id="vg:3654618"/>
<dbReference type="OrthoDB" id="1815at10239"/>
<dbReference type="EvolutionaryTrace" id="Q9Q0U8"/>
<dbReference type="PRO" id="PR:Q9Q0U8"/>
<dbReference type="Proteomes" id="UP000131152">
    <property type="component" value="Genome"/>
</dbReference>
<dbReference type="GO" id="GO:0019029">
    <property type="term" value="C:helical viral capsid"/>
    <property type="evidence" value="ECO:0007669"/>
    <property type="project" value="UniProtKB-UniRule"/>
</dbReference>
<dbReference type="GO" id="GO:0043657">
    <property type="term" value="C:host cell"/>
    <property type="evidence" value="ECO:0007669"/>
    <property type="project" value="GOC"/>
</dbReference>
<dbReference type="GO" id="GO:0042025">
    <property type="term" value="C:host cell nucleus"/>
    <property type="evidence" value="ECO:0007669"/>
    <property type="project" value="UniProtKB-SubCell"/>
</dbReference>
<dbReference type="GO" id="GO:1990904">
    <property type="term" value="C:ribonucleoprotein complex"/>
    <property type="evidence" value="ECO:0007669"/>
    <property type="project" value="UniProtKB-KW"/>
</dbReference>
<dbReference type="GO" id="GO:0019013">
    <property type="term" value="C:viral nucleocapsid"/>
    <property type="evidence" value="ECO:0007669"/>
    <property type="project" value="UniProtKB-UniRule"/>
</dbReference>
<dbReference type="GO" id="GO:0003723">
    <property type="term" value="F:RNA binding"/>
    <property type="evidence" value="ECO:0007669"/>
    <property type="project" value="UniProtKB-UniRule"/>
</dbReference>
<dbReference type="GO" id="GO:0005198">
    <property type="term" value="F:structural molecule activity"/>
    <property type="evidence" value="ECO:0007669"/>
    <property type="project" value="UniProtKB-UniRule"/>
</dbReference>
<dbReference type="GO" id="GO:0046718">
    <property type="term" value="P:symbiont entry into host cell"/>
    <property type="evidence" value="ECO:0007669"/>
    <property type="project" value="UniProtKB-KW"/>
</dbReference>
<dbReference type="GO" id="GO:0075732">
    <property type="term" value="P:viral penetration into host nucleus"/>
    <property type="evidence" value="ECO:0007669"/>
    <property type="project" value="UniProtKB-UniRule"/>
</dbReference>
<dbReference type="HAMAP" id="MF_04070">
    <property type="entry name" value="INFV_NCAP"/>
    <property type="match status" value="1"/>
</dbReference>
<dbReference type="InterPro" id="IPR002141">
    <property type="entry name" value="Flu_NP"/>
</dbReference>
<dbReference type="Pfam" id="PF00506">
    <property type="entry name" value="Flu_NP"/>
    <property type="match status" value="1"/>
</dbReference>
<dbReference type="SUPFAM" id="SSF161003">
    <property type="entry name" value="flu NP-like"/>
    <property type="match status" value="1"/>
</dbReference>
<comment type="function">
    <text evidence="1">Encapsidates the negative strand viral RNA, protecting it from nucleases. The encapsidated genomic RNA is termed the ribonucleoprotein (RNP) and serves as template for transcription and replication. The RNP needs to be localized in the host nucleus to start an infectious cycle, but is too large to diffuse through the nuclear pore complex. NP comprises at least 2 nuclear localization signals that are responsible for the active RNP import into the nucleus through cellular importin alpha/beta pathway. Later in the infection, nclear export of RNPs are mediated through viral proteins NEP interacting with M1 which binds nucleoproteins. It is possible that nucleoprotein binds directly host exportin-1/XPO1 and plays an active role in RNPs nuclear export. M1 interaction with RNP seems to hide nucleoprotein's nuclear localization signals. Soon after a virion infects a new cell, M1 dissociates from the RNP under acidification of the virion driven by M2 protein. Dissociation of M1 from RNP unmasks nucleoprotein's nuclear localization signals, targeting the RNP to the nucleus.</text>
</comment>
<comment type="subunit">
    <text evidence="1">Homomultimerizes to form the nucleocapsid. May bind host exportin-1/XPO1. Binds to viral genomic RNA. Protein-RNA contacts are mediated by a combination of electrostatic interactions between positively charged residues and the phosphate backbone and planar interactions between aromatic side chains and bases.</text>
</comment>
<comment type="subcellular location">
    <subcellularLocation>
        <location evidence="1">Virion</location>
    </subcellularLocation>
    <subcellularLocation>
        <location evidence="1">Host nucleus</location>
    </subcellularLocation>
</comment>
<comment type="PTM">
    <text evidence="1">Late in virus-infected cells, may be cleaved from a 56-kDa protein to a 53-kDa protein by a cellular caspase. This cleavage might be a marker for the onset of apoptosis in infected cells or have a specific function in virus host interaction.</text>
</comment>
<comment type="similarity">
    <text evidence="1">Belongs to the influenza viruses nucleoprotein family.</text>
</comment>
<name>NCAP_I96A0</name>
<protein>
    <recommendedName>
        <fullName evidence="1">Nucleoprotein</fullName>
    </recommendedName>
    <alternativeName>
        <fullName evidence="1">Nucleocapsid protein</fullName>
        <shortName evidence="1">Protein N</shortName>
    </alternativeName>
</protein>
<organismHost>
    <name type="scientific">Aves</name>
    <dbReference type="NCBI Taxonomy" id="8782"/>
</organismHost>
<organismHost>
    <name type="scientific">Felis catus</name>
    <name type="common">Cat</name>
    <name type="synonym">Felis silvestris catus</name>
    <dbReference type="NCBI Taxonomy" id="9685"/>
</organismHost>
<organismHost>
    <name type="scientific">Homo sapiens</name>
    <name type="common">Human</name>
    <dbReference type="NCBI Taxonomy" id="9606"/>
</organismHost>
<organismHost>
    <name type="scientific">Panthera pardus</name>
    <name type="common">Leopard</name>
    <name type="synonym">Felis pardus</name>
    <dbReference type="NCBI Taxonomy" id="9691"/>
</organismHost>
<organismHost>
    <name type="scientific">Panthera tigris</name>
    <name type="common">Tiger</name>
    <dbReference type="NCBI Taxonomy" id="9694"/>
</organismHost>
<organismHost>
    <name type="scientific">Sus scrofa</name>
    <name type="common">Pig</name>
    <dbReference type="NCBI Taxonomy" id="9823"/>
</organismHost>
<evidence type="ECO:0000255" key="1">
    <source>
        <dbReference type="HAMAP-Rule" id="MF_04070"/>
    </source>
</evidence>
<evidence type="ECO:0000256" key="2">
    <source>
        <dbReference type="SAM" id="MobiDB-lite"/>
    </source>
</evidence>
<feature type="chain" id="PRO_0000402424" description="Nucleoprotein">
    <location>
        <begin position="1"/>
        <end position="498"/>
    </location>
</feature>
<feature type="region of interest" description="Disordered" evidence="2">
    <location>
        <begin position="1"/>
        <end position="21"/>
    </location>
</feature>
<feature type="short sequence motif" description="Unconventional nuclear localization signal" evidence="1">
    <location>
        <begin position="1"/>
        <end position="18"/>
    </location>
</feature>
<feature type="short sequence motif" description="Bipartite nuclear localization signal" evidence="1">
    <location>
        <begin position="198"/>
        <end position="216"/>
    </location>
</feature>
<keyword id="KW-0002">3D-structure</keyword>
<keyword id="KW-0167">Capsid protein</keyword>
<keyword id="KW-1139">Helical capsid protein</keyword>
<keyword id="KW-1048">Host nucleus</keyword>
<keyword id="KW-0945">Host-virus interaction</keyword>
<keyword id="KW-1185">Reference proteome</keyword>
<keyword id="KW-0687">Ribonucleoprotein</keyword>
<keyword id="KW-0694">RNA-binding</keyword>
<keyword id="KW-0543">Viral nucleoprotein</keyword>
<keyword id="KW-1163">Viral penetration into host nucleus</keyword>
<keyword id="KW-0946">Virion</keyword>
<keyword id="KW-1160">Virus entry into host cell</keyword>
<reference key="1">
    <citation type="journal article" date="1999" name="Virology">
        <title>Genetic characterization of the pathogenic influenza A/Goose/Guangdong/1/96 (H5N1) virus: similarity of its hemagglutinin gene to those of H5N1 viruses from the 1997 outbreaks in Hong Kong.</title>
        <authorList>
            <person name="Xu X."/>
            <person name="Subbarao K."/>
            <person name="Cox N.J."/>
            <person name="Guo Y."/>
        </authorList>
    </citation>
    <scope>NUCLEOTIDE SEQUENCE [GENOMIC RNA]</scope>
</reference>
<organism>
    <name type="scientific">Influenza A virus (strain A/Goose/Guangdong/1/1996 H5N1 genotype Gs/Gd)</name>
    <dbReference type="NCBI Taxonomy" id="93838"/>
    <lineage>
        <taxon>Viruses</taxon>
        <taxon>Riboviria</taxon>
        <taxon>Orthornavirae</taxon>
        <taxon>Negarnaviricota</taxon>
        <taxon>Polyploviricotina</taxon>
        <taxon>Insthoviricetes</taxon>
        <taxon>Articulavirales</taxon>
        <taxon>Orthomyxoviridae</taxon>
        <taxon>Alphainfluenzavirus</taxon>
        <taxon>Alphainfluenzavirus influenzae</taxon>
        <taxon>Influenza A virus</taxon>
    </lineage>
</organism>
<proteinExistence type="evidence at protein level"/>
<gene>
    <name evidence="1" type="primary">NP</name>
</gene>
<sequence>MASQGTKRSYEQMETGGERQNATEIRASVGRMVGGIGRFYIQMCTELKLSDYEGRLIQNSITIERMVLSAFDERRNKYLEEHPSAGKDPKKTGGPIYRRRDGKWVRELILYDKEEIRRIWRQANNGEDATAGLTHMMIWHSNLNDATYQRTRALVRTGMDPRMCSLMQGSTLPRRSGAAGAAVKGVGTMVMELIRMIKRGINDRNFWRGENGRRTRIAYERMCNILKGKFQTAAQRAMMDQVRESRNPGNAEIEDLIFLARSALILRGSVAHKSCLPACVYGLAVASGYDFEREGYSLVGIDPFRLLQNSQVFSLIRPNENPAHKSQLVWMACHSAAFEDLRVSSFIRGTRVAPRGQLSTRGVQIASNENMETMDSSTLELRSRYWAIRTRSGGNTNQQRASAGQISVQPTFSVQRNLPFERATIMAAFTGNTEGRTSDMRTEIIRMMESSRPEDVSFQGRGVFELSDEKATNPIVPSFDMSNEGSYFFGDNAEEYDN</sequence>
<accession>Q9Q0U8</accession>